<reference key="1">
    <citation type="journal article" date="1996" name="Genomics">
        <title>Isolation, characterization, and mapping of two mouse mitochondrial voltage-dependent anion channel isoforms.</title>
        <authorList>
            <person name="Sampson M.J."/>
            <person name="Lovell R.S."/>
            <person name="Craigen W.J."/>
        </authorList>
    </citation>
    <scope>NUCLEOTIDE SEQUENCE [MRNA]</scope>
    <scope>TISSUE SPECIFICITY</scope>
    <source>
        <tissue>Brain</tissue>
    </source>
</reference>
<reference key="2">
    <citation type="journal article" date="2005" name="Science">
        <title>The transcriptional landscape of the mammalian genome.</title>
        <authorList>
            <person name="Carninci P."/>
            <person name="Kasukawa T."/>
            <person name="Katayama S."/>
            <person name="Gough J."/>
            <person name="Frith M.C."/>
            <person name="Maeda N."/>
            <person name="Oyama R."/>
            <person name="Ravasi T."/>
            <person name="Lenhard B."/>
            <person name="Wells C."/>
            <person name="Kodzius R."/>
            <person name="Shimokawa K."/>
            <person name="Bajic V.B."/>
            <person name="Brenner S.E."/>
            <person name="Batalov S."/>
            <person name="Forrest A.R."/>
            <person name="Zavolan M."/>
            <person name="Davis M.J."/>
            <person name="Wilming L.G."/>
            <person name="Aidinis V."/>
            <person name="Allen J.E."/>
            <person name="Ambesi-Impiombato A."/>
            <person name="Apweiler R."/>
            <person name="Aturaliya R.N."/>
            <person name="Bailey T.L."/>
            <person name="Bansal M."/>
            <person name="Baxter L."/>
            <person name="Beisel K.W."/>
            <person name="Bersano T."/>
            <person name="Bono H."/>
            <person name="Chalk A.M."/>
            <person name="Chiu K.P."/>
            <person name="Choudhary V."/>
            <person name="Christoffels A."/>
            <person name="Clutterbuck D.R."/>
            <person name="Crowe M.L."/>
            <person name="Dalla E."/>
            <person name="Dalrymple B.P."/>
            <person name="de Bono B."/>
            <person name="Della Gatta G."/>
            <person name="di Bernardo D."/>
            <person name="Down T."/>
            <person name="Engstrom P."/>
            <person name="Fagiolini M."/>
            <person name="Faulkner G."/>
            <person name="Fletcher C.F."/>
            <person name="Fukushima T."/>
            <person name="Furuno M."/>
            <person name="Futaki S."/>
            <person name="Gariboldi M."/>
            <person name="Georgii-Hemming P."/>
            <person name="Gingeras T.R."/>
            <person name="Gojobori T."/>
            <person name="Green R.E."/>
            <person name="Gustincich S."/>
            <person name="Harbers M."/>
            <person name="Hayashi Y."/>
            <person name="Hensch T.K."/>
            <person name="Hirokawa N."/>
            <person name="Hill D."/>
            <person name="Huminiecki L."/>
            <person name="Iacono M."/>
            <person name="Ikeo K."/>
            <person name="Iwama A."/>
            <person name="Ishikawa T."/>
            <person name="Jakt M."/>
            <person name="Kanapin A."/>
            <person name="Katoh M."/>
            <person name="Kawasawa Y."/>
            <person name="Kelso J."/>
            <person name="Kitamura H."/>
            <person name="Kitano H."/>
            <person name="Kollias G."/>
            <person name="Krishnan S.P."/>
            <person name="Kruger A."/>
            <person name="Kummerfeld S.K."/>
            <person name="Kurochkin I.V."/>
            <person name="Lareau L.F."/>
            <person name="Lazarevic D."/>
            <person name="Lipovich L."/>
            <person name="Liu J."/>
            <person name="Liuni S."/>
            <person name="McWilliam S."/>
            <person name="Madan Babu M."/>
            <person name="Madera M."/>
            <person name="Marchionni L."/>
            <person name="Matsuda H."/>
            <person name="Matsuzawa S."/>
            <person name="Miki H."/>
            <person name="Mignone F."/>
            <person name="Miyake S."/>
            <person name="Morris K."/>
            <person name="Mottagui-Tabar S."/>
            <person name="Mulder N."/>
            <person name="Nakano N."/>
            <person name="Nakauchi H."/>
            <person name="Ng P."/>
            <person name="Nilsson R."/>
            <person name="Nishiguchi S."/>
            <person name="Nishikawa S."/>
            <person name="Nori F."/>
            <person name="Ohara O."/>
            <person name="Okazaki Y."/>
            <person name="Orlando V."/>
            <person name="Pang K.C."/>
            <person name="Pavan W.J."/>
            <person name="Pavesi G."/>
            <person name="Pesole G."/>
            <person name="Petrovsky N."/>
            <person name="Piazza S."/>
            <person name="Reed J."/>
            <person name="Reid J.F."/>
            <person name="Ring B.Z."/>
            <person name="Ringwald M."/>
            <person name="Rost B."/>
            <person name="Ruan Y."/>
            <person name="Salzberg S.L."/>
            <person name="Sandelin A."/>
            <person name="Schneider C."/>
            <person name="Schoenbach C."/>
            <person name="Sekiguchi K."/>
            <person name="Semple C.A."/>
            <person name="Seno S."/>
            <person name="Sessa L."/>
            <person name="Sheng Y."/>
            <person name="Shibata Y."/>
            <person name="Shimada H."/>
            <person name="Shimada K."/>
            <person name="Silva D."/>
            <person name="Sinclair B."/>
            <person name="Sperling S."/>
            <person name="Stupka E."/>
            <person name="Sugiura K."/>
            <person name="Sultana R."/>
            <person name="Takenaka Y."/>
            <person name="Taki K."/>
            <person name="Tammoja K."/>
            <person name="Tan S.L."/>
            <person name="Tang S."/>
            <person name="Taylor M.S."/>
            <person name="Tegner J."/>
            <person name="Teichmann S.A."/>
            <person name="Ueda H.R."/>
            <person name="van Nimwegen E."/>
            <person name="Verardo R."/>
            <person name="Wei C.L."/>
            <person name="Yagi K."/>
            <person name="Yamanishi H."/>
            <person name="Zabarovsky E."/>
            <person name="Zhu S."/>
            <person name="Zimmer A."/>
            <person name="Hide W."/>
            <person name="Bult C."/>
            <person name="Grimmond S.M."/>
            <person name="Teasdale R.D."/>
            <person name="Liu E.T."/>
            <person name="Brusic V."/>
            <person name="Quackenbush J."/>
            <person name="Wahlestedt C."/>
            <person name="Mattick J.S."/>
            <person name="Hume D.A."/>
            <person name="Kai C."/>
            <person name="Sasaki D."/>
            <person name="Tomaru Y."/>
            <person name="Fukuda S."/>
            <person name="Kanamori-Katayama M."/>
            <person name="Suzuki M."/>
            <person name="Aoki J."/>
            <person name="Arakawa T."/>
            <person name="Iida J."/>
            <person name="Imamura K."/>
            <person name="Itoh M."/>
            <person name="Kato T."/>
            <person name="Kawaji H."/>
            <person name="Kawagashira N."/>
            <person name="Kawashima T."/>
            <person name="Kojima M."/>
            <person name="Kondo S."/>
            <person name="Konno H."/>
            <person name="Nakano K."/>
            <person name="Ninomiya N."/>
            <person name="Nishio T."/>
            <person name="Okada M."/>
            <person name="Plessy C."/>
            <person name="Shibata K."/>
            <person name="Shiraki T."/>
            <person name="Suzuki S."/>
            <person name="Tagami M."/>
            <person name="Waki K."/>
            <person name="Watahiki A."/>
            <person name="Okamura-Oho Y."/>
            <person name="Suzuki H."/>
            <person name="Kawai J."/>
            <person name="Hayashizaki Y."/>
        </authorList>
    </citation>
    <scope>NUCLEOTIDE SEQUENCE [LARGE SCALE MRNA]</scope>
    <source>
        <strain>BALB/cJ</strain>
        <strain>C57BL/6J</strain>
        <tissue>Bone marrow</tissue>
    </source>
</reference>
<reference key="3">
    <citation type="submission" date="2003-05" db="EMBL/GenBank/DDBJ databases">
        <title>Genomic sequence analysis in the mouse T-complex region.</title>
        <authorList>
            <person name="Brathwaite M.E."/>
            <person name="Waeltz P."/>
            <person name="Qian Y."/>
            <person name="Dudekula D."/>
            <person name="Schlessinger D."/>
            <person name="Nagaraja R."/>
        </authorList>
    </citation>
    <scope>NUCLEOTIDE SEQUENCE [LARGE SCALE GENOMIC DNA]</scope>
    <source>
        <strain>C57BL/6J</strain>
    </source>
</reference>
<reference key="4">
    <citation type="journal article" date="2004" name="Genome Res.">
        <title>The status, quality, and expansion of the NIH full-length cDNA project: the Mammalian Gene Collection (MGC).</title>
        <authorList>
            <consortium name="The MGC Project Team"/>
        </authorList>
    </citation>
    <scope>NUCLEOTIDE SEQUENCE [LARGE SCALE MRNA]</scope>
    <source>
        <strain>FVB/N</strain>
        <tissue>Mammary tumor</tissue>
    </source>
</reference>
<reference key="5">
    <citation type="submission" date="2007-04" db="UniProtKB">
        <authorList>
            <person name="Lubec G."/>
            <person name="Klug S."/>
            <person name="Kang S.U."/>
        </authorList>
    </citation>
    <scope>PROTEIN SEQUENCE OF 33-40; 47-65; 76-121; 179-230 AND 237-278</scope>
    <scope>IDENTIFICATION BY MASS SPECTROMETRY</scope>
    <source>
        <strain>C57BL/6J</strain>
        <tissue>Brain</tissue>
        <tissue>Hippocampus</tissue>
    </source>
</reference>
<reference key="6">
    <citation type="journal article" date="1999" name="J. Membr. Biol.">
        <title>Mouse VDAC isoforms expressed in yeast: channel properties and their roles in mitochondrial outer membrane permeability.</title>
        <authorList>
            <person name="Xu X."/>
            <person name="Decker W."/>
            <person name="Sampson M.J."/>
            <person name="Craigen W.J."/>
            <person name="Colombini M."/>
        </authorList>
    </citation>
    <scope>FUNCTION</scope>
    <scope>TRANSPORTER ACTIVITY</scope>
</reference>
<reference key="7">
    <citation type="journal article" date="2010" name="Cell">
        <title>A tissue-specific atlas of mouse protein phosphorylation and expression.</title>
        <authorList>
            <person name="Huttlin E.L."/>
            <person name="Jedrychowski M.P."/>
            <person name="Elias J.E."/>
            <person name="Goswami T."/>
            <person name="Rad R."/>
            <person name="Beausoleil S.A."/>
            <person name="Villen J."/>
            <person name="Haas W."/>
            <person name="Sowa M.E."/>
            <person name="Gygi S.P."/>
        </authorList>
    </citation>
    <scope>IDENTIFICATION BY MASS SPECTROMETRY [LARGE SCALE ANALYSIS]</scope>
    <source>
        <tissue>Brain</tissue>
        <tissue>Brown adipose tissue</tissue>
        <tissue>Heart</tissue>
        <tissue>Kidney</tissue>
        <tissue>Liver</tissue>
        <tissue>Lung</tissue>
        <tissue>Pancreas</tissue>
        <tissue>Spleen</tissue>
        <tissue>Testis</tissue>
    </source>
</reference>
<reference key="8">
    <citation type="journal article" date="2012" name="Dev. Biol.">
        <title>KLC3 is involved in sperm tail midpiece formation and sperm function.</title>
        <authorList>
            <person name="Zhang Y."/>
            <person name="Ou Y."/>
            <person name="Cheng M."/>
            <person name="Saadi H.S."/>
            <person name="Thundathil J.C."/>
            <person name="van der Hoorn F.A."/>
        </authorList>
    </citation>
    <scope>SUBCELLULAR LOCATION</scope>
    <scope>INTERACTION WITH KLC3</scope>
</reference>
<reference key="9">
    <citation type="journal article" date="2013" name="Mol. Cell">
        <title>SIRT5-mediated lysine desuccinylation impacts diverse metabolic pathways.</title>
        <authorList>
            <person name="Park J."/>
            <person name="Chen Y."/>
            <person name="Tishkoff D.X."/>
            <person name="Peng C."/>
            <person name="Tan M."/>
            <person name="Dai L."/>
            <person name="Xie Z."/>
            <person name="Zhang Y."/>
            <person name="Zwaans B.M."/>
            <person name="Skinner M.E."/>
            <person name="Lombard D.B."/>
            <person name="Zhao Y."/>
        </authorList>
    </citation>
    <scope>SUCCINYLATION [LARGE SCALE ANALYSIS] AT LYS-32</scope>
    <scope>IDENTIFICATION BY MASS SPECTROMETRY [LARGE SCALE ANALYSIS]</scope>
    <source>
        <tissue>Embryonic fibroblast</tissue>
    </source>
</reference>
<reference key="10">
    <citation type="journal article" date="2013" name="Proc. Natl. Acad. Sci. U.S.A.">
        <title>Label-free quantitative proteomics of the lysine acetylome in mitochondria identifies substrates of SIRT3 in metabolic pathways.</title>
        <authorList>
            <person name="Rardin M.J."/>
            <person name="Newman J.C."/>
            <person name="Held J.M."/>
            <person name="Cusack M.P."/>
            <person name="Sorensen D.J."/>
            <person name="Li B."/>
            <person name="Schilling B."/>
            <person name="Mooney S.D."/>
            <person name="Kahn C.R."/>
            <person name="Verdin E."/>
            <person name="Gibson B.W."/>
        </authorList>
    </citation>
    <scope>ACETYLATION [LARGE SCALE ANALYSIS] AT LYS-32 AND LYS-121</scope>
    <scope>IDENTIFICATION BY MASS SPECTROMETRY [LARGE SCALE ANALYSIS]</scope>
    <source>
        <tissue>Liver</tissue>
    </source>
</reference>
<reference key="11">
    <citation type="journal article" date="2021" name="Cell Death Differ.">
        <title>SPATA33 is an autophagy mediator for cargo selectivity in germline mitophagy.</title>
        <authorList>
            <person name="Zhang Y."/>
            <person name="Xu X."/>
            <person name="Hu M."/>
            <person name="Wang X."/>
            <person name="Cheng H."/>
            <person name="Zhou R."/>
        </authorList>
    </citation>
    <scope>TISSUE SPECIFICITY</scope>
    <scope>INTERACTION WITH SPATA33</scope>
</reference>
<reference key="12">
    <citation type="journal article" date="2021" name="Proc. Natl. Acad. Sci. U.S.A.">
        <title>ARMC12 regulates spatiotemporal mitochondrial dynamics during spermiogenesis and is required for male fertility.</title>
        <authorList>
            <person name="Shimada K."/>
            <person name="Park S."/>
            <person name="Miyata H."/>
            <person name="Yu Z."/>
            <person name="Morohoshi A."/>
            <person name="Oura S."/>
            <person name="Matzuk M.M."/>
            <person name="Ikawa M."/>
        </authorList>
    </citation>
    <scope>INTERACTION WITH ARMC12</scope>
</reference>
<reference key="13">
    <citation type="journal article" date="2021" name="Proc. Natl. Acad. Sci. U.S.A.">
        <title>SPATA33 localizes calcineurin to the mitochondria and regulates sperm motility in mice.</title>
        <authorList>
            <person name="Miyata H."/>
            <person name="Oura S."/>
            <person name="Morohoshi A."/>
            <person name="Shimada K."/>
            <person name="Mashiko D."/>
            <person name="Oyama Y."/>
            <person name="Kaneda Y."/>
            <person name="Matsumura T."/>
            <person name="Abbasi F."/>
            <person name="Ikawa M."/>
        </authorList>
    </citation>
    <scope>INTERACTION WITH SPATA33 AND PPP3CC</scope>
</reference>
<reference key="14">
    <citation type="journal article" date="2021" name="Nat. Chem. Biol.">
        <title>A proteome-wide map of 20(S)-hydroxycholesterol interactors in cell membranes.</title>
        <authorList>
            <person name="Cheng Y.S."/>
            <person name="Zhang T."/>
            <person name="Ma X."/>
            <person name="Pratuangtham S."/>
            <person name="Zhang G.C."/>
            <person name="Ondrus A.A."/>
            <person name="Mafi A."/>
            <person name="Lomenick B."/>
            <person name="Jones J.J."/>
            <person name="Ondrus A.E."/>
        </authorList>
    </citation>
    <scope>FUNCTION</scope>
</reference>
<evidence type="ECO:0000250" key="1">
    <source>
        <dbReference type="UniProtKB" id="P21796"/>
    </source>
</evidence>
<evidence type="ECO:0000250" key="2">
    <source>
        <dbReference type="UniProtKB" id="P45880"/>
    </source>
</evidence>
<evidence type="ECO:0000250" key="3">
    <source>
        <dbReference type="UniProtKB" id="Q60932"/>
    </source>
</evidence>
<evidence type="ECO:0000269" key="4">
    <source>
    </source>
</evidence>
<evidence type="ECO:0000269" key="5">
    <source>
    </source>
</evidence>
<evidence type="ECO:0000269" key="6">
    <source>
    </source>
</evidence>
<evidence type="ECO:0000269" key="7">
    <source>
    </source>
</evidence>
<evidence type="ECO:0000269" key="8">
    <source>
    </source>
</evidence>
<evidence type="ECO:0000269" key="9">
    <source>
    </source>
</evidence>
<evidence type="ECO:0000269" key="10">
    <source>
    </source>
</evidence>
<evidence type="ECO:0000303" key="11">
    <source>
    </source>
</evidence>
<evidence type="ECO:0000305" key="12"/>
<evidence type="ECO:0000305" key="13">
    <source>
    </source>
</evidence>
<evidence type="ECO:0000312" key="14">
    <source>
        <dbReference type="MGI" id="MGI:106915"/>
    </source>
</evidence>
<evidence type="ECO:0007744" key="15">
    <source>
    </source>
</evidence>
<evidence type="ECO:0007744" key="16">
    <source>
    </source>
</evidence>
<sequence>MAECCVPVCPRPMCIPPPYADLGKAARDIFNKGFGFGLVKLDVKTKSCSGVEFSTSGSSNTDTGKVSGTLETKYKWCEYGLTFTEKWNTDNTLGTEIAIEDQICQGLKLTFDTTFSPNTGKKSGKIKSAYKRECINLGCDVDFDFAGPAIHGSAVFGYEGWLAGYQMTFDSAKSKLTRSNFAVGYRTGDFQLHTNVNNGTEFGGSIYQKVCEDFDTSVNLAWTSGTNCTRFGIAAKYQLDPTASISAKVNNSSLIGVGYTQTLRPGVKLTLSALVDGKSFNAGGHKLGLALELEA</sequence>
<gene>
    <name evidence="14" type="primary">Vdac2</name>
    <name type="synonym">Vdac6</name>
</gene>
<dbReference type="EMBL" id="U30838">
    <property type="protein sequence ID" value="AAC13321.1"/>
    <property type="molecule type" value="mRNA"/>
</dbReference>
<dbReference type="EMBL" id="AK168199">
    <property type="protein sequence ID" value="BAE40159.1"/>
    <property type="molecule type" value="mRNA"/>
</dbReference>
<dbReference type="EMBL" id="AK159561">
    <property type="protein sequence ID" value="BAE35185.1"/>
    <property type="molecule type" value="mRNA"/>
</dbReference>
<dbReference type="EMBL" id="AK152274">
    <property type="protein sequence ID" value="BAE31090.1"/>
    <property type="molecule type" value="mRNA"/>
</dbReference>
<dbReference type="EMBL" id="AK150940">
    <property type="protein sequence ID" value="BAE29975.1"/>
    <property type="molecule type" value="mRNA"/>
</dbReference>
<dbReference type="EMBL" id="AK150627">
    <property type="protein sequence ID" value="BAE29717.1"/>
    <property type="molecule type" value="mRNA"/>
</dbReference>
<dbReference type="EMBL" id="AK150504">
    <property type="protein sequence ID" value="BAE29617.1"/>
    <property type="molecule type" value="mRNA"/>
</dbReference>
<dbReference type="EMBL" id="AK012359">
    <property type="protein sequence ID" value="BAE43231.1"/>
    <property type="molecule type" value="mRNA"/>
</dbReference>
<dbReference type="EMBL" id="AY294423">
    <property type="protein sequence ID" value="AAQ01516.1"/>
    <property type="molecule type" value="Genomic_DNA"/>
</dbReference>
<dbReference type="EMBL" id="BC003731">
    <property type="protein sequence ID" value="AAH03731.2"/>
    <property type="molecule type" value="mRNA"/>
</dbReference>
<dbReference type="CCDS" id="CCDS26867.1"/>
<dbReference type="RefSeq" id="NP_035825.1">
    <property type="nucleotide sequence ID" value="NM_011695.2"/>
</dbReference>
<dbReference type="SMR" id="Q60930"/>
<dbReference type="BioGRID" id="204508">
    <property type="interactions" value="43"/>
</dbReference>
<dbReference type="FunCoup" id="Q60930">
    <property type="interactions" value="2723"/>
</dbReference>
<dbReference type="IntAct" id="Q60930">
    <property type="interactions" value="29"/>
</dbReference>
<dbReference type="MINT" id="Q60930"/>
<dbReference type="STRING" id="10090.ENSMUSP00000022293"/>
<dbReference type="GlyGen" id="Q60930">
    <property type="glycosylation" value="4 sites, 3 N-linked glycans (3 sites), 1 O-linked glycan (1 site)"/>
</dbReference>
<dbReference type="iPTMnet" id="Q60930"/>
<dbReference type="PhosphoSitePlus" id="Q60930"/>
<dbReference type="SwissPalm" id="Q60930"/>
<dbReference type="REPRODUCTION-2DPAGE" id="Q60930"/>
<dbReference type="jPOST" id="Q60930"/>
<dbReference type="PaxDb" id="10090-ENSMUSP00000022293"/>
<dbReference type="PeptideAtlas" id="Q60930"/>
<dbReference type="ProteomicsDB" id="275176"/>
<dbReference type="Pumba" id="Q60930"/>
<dbReference type="Antibodypedia" id="29670">
    <property type="antibodies" value="304 antibodies from 31 providers"/>
</dbReference>
<dbReference type="DNASU" id="22334"/>
<dbReference type="Ensembl" id="ENSMUST00000022293.14">
    <property type="protein sequence ID" value="ENSMUSP00000022293.8"/>
    <property type="gene ID" value="ENSMUSG00000021771.15"/>
</dbReference>
<dbReference type="GeneID" id="22334"/>
<dbReference type="KEGG" id="mmu:22334"/>
<dbReference type="UCSC" id="uc007sls.1">
    <property type="organism name" value="mouse"/>
</dbReference>
<dbReference type="AGR" id="MGI:106915"/>
<dbReference type="CTD" id="7417"/>
<dbReference type="MGI" id="MGI:106915">
    <property type="gene designation" value="Vdac2"/>
</dbReference>
<dbReference type="VEuPathDB" id="HostDB:ENSMUSG00000021771"/>
<dbReference type="eggNOG" id="KOG3126">
    <property type="taxonomic scope" value="Eukaryota"/>
</dbReference>
<dbReference type="GeneTree" id="ENSGT00950000182869"/>
<dbReference type="InParanoid" id="Q60930"/>
<dbReference type="OMA" id="FKQPAFH"/>
<dbReference type="OrthoDB" id="7827681at2759"/>
<dbReference type="PhylomeDB" id="Q60930"/>
<dbReference type="TreeFam" id="TF315091"/>
<dbReference type="Reactome" id="R-MMU-5205685">
    <property type="pathway name" value="PINK1-PRKN Mediated Mitophagy"/>
</dbReference>
<dbReference type="Reactome" id="R-MMU-5689880">
    <property type="pathway name" value="Ub-specific processing proteases"/>
</dbReference>
<dbReference type="BioGRID-ORCS" id="22334">
    <property type="hits" value="17 hits in 60 CRISPR screens"/>
</dbReference>
<dbReference type="CD-CODE" id="CE726F99">
    <property type="entry name" value="Postsynaptic density"/>
</dbReference>
<dbReference type="ChiTaRS" id="Vdac2">
    <property type="organism name" value="mouse"/>
</dbReference>
<dbReference type="PRO" id="PR:Q60930"/>
<dbReference type="Proteomes" id="UP000000589">
    <property type="component" value="Chromosome 14"/>
</dbReference>
<dbReference type="RNAct" id="Q60930">
    <property type="molecule type" value="protein"/>
</dbReference>
<dbReference type="Bgee" id="ENSMUSG00000021771">
    <property type="expression patterns" value="Expressed in epithelium of stomach and 277 other cell types or tissues"/>
</dbReference>
<dbReference type="ExpressionAtlas" id="Q60930">
    <property type="expression patterns" value="baseline and differential"/>
</dbReference>
<dbReference type="GO" id="GO:0005743">
    <property type="term" value="C:mitochondrial inner membrane"/>
    <property type="evidence" value="ECO:0007005"/>
    <property type="project" value="MGI"/>
</dbReference>
<dbReference type="GO" id="GO:0005741">
    <property type="term" value="C:mitochondrial outer membrane"/>
    <property type="evidence" value="ECO:0000250"/>
    <property type="project" value="UniProtKB"/>
</dbReference>
<dbReference type="GO" id="GO:0005739">
    <property type="term" value="C:mitochondrion"/>
    <property type="evidence" value="ECO:0000315"/>
    <property type="project" value="UniProtKB"/>
</dbReference>
<dbReference type="GO" id="GO:0043209">
    <property type="term" value="C:myelin sheath"/>
    <property type="evidence" value="ECO:0007005"/>
    <property type="project" value="UniProtKB"/>
</dbReference>
<dbReference type="GO" id="GO:0046930">
    <property type="term" value="C:pore complex"/>
    <property type="evidence" value="ECO:0007669"/>
    <property type="project" value="UniProtKB-KW"/>
</dbReference>
<dbReference type="GO" id="GO:0097225">
    <property type="term" value="C:sperm midpiece"/>
    <property type="evidence" value="ECO:0000314"/>
    <property type="project" value="UniProtKB"/>
</dbReference>
<dbReference type="GO" id="GO:0005524">
    <property type="term" value="F:ATP binding"/>
    <property type="evidence" value="ECO:0007669"/>
    <property type="project" value="UniProtKB-KW"/>
</dbReference>
<dbReference type="GO" id="GO:0097001">
    <property type="term" value="F:ceramide binding"/>
    <property type="evidence" value="ECO:0000250"/>
    <property type="project" value="UniProtKB"/>
</dbReference>
<dbReference type="GO" id="GO:0015485">
    <property type="term" value="F:cholesterol binding"/>
    <property type="evidence" value="ECO:0000250"/>
    <property type="project" value="UniProtKB"/>
</dbReference>
<dbReference type="GO" id="GO:0008142">
    <property type="term" value="F:oxysterol binding"/>
    <property type="evidence" value="ECO:0000315"/>
    <property type="project" value="UniProtKB"/>
</dbReference>
<dbReference type="GO" id="GO:0031210">
    <property type="term" value="F:phosphatidylcholine binding"/>
    <property type="evidence" value="ECO:0000250"/>
    <property type="project" value="UniProtKB"/>
</dbReference>
<dbReference type="GO" id="GO:0015288">
    <property type="term" value="F:porin activity"/>
    <property type="evidence" value="ECO:0007669"/>
    <property type="project" value="UniProtKB-KW"/>
</dbReference>
<dbReference type="GO" id="GO:0008308">
    <property type="term" value="F:voltage-gated monoatomic anion channel activity"/>
    <property type="evidence" value="ECO:0007669"/>
    <property type="project" value="InterPro"/>
</dbReference>
<dbReference type="GO" id="GO:0005244">
    <property type="term" value="F:voltage-gated monoatomic ion channel activity"/>
    <property type="evidence" value="ECO:0000314"/>
    <property type="project" value="UniProtKB"/>
</dbReference>
<dbReference type="GO" id="GO:0006869">
    <property type="term" value="P:lipid transport"/>
    <property type="evidence" value="ECO:0007669"/>
    <property type="project" value="UniProtKB-KW"/>
</dbReference>
<dbReference type="GO" id="GO:0097345">
    <property type="term" value="P:mitochondrial outer membrane permeabilization"/>
    <property type="evidence" value="ECO:0000250"/>
    <property type="project" value="UniProtKB"/>
</dbReference>
<dbReference type="GO" id="GO:0006820">
    <property type="term" value="P:monoatomic anion transport"/>
    <property type="evidence" value="ECO:0000250"/>
    <property type="project" value="UniProtKB"/>
</dbReference>
<dbReference type="GO" id="GO:2001243">
    <property type="term" value="P:negative regulation of intrinsic apoptotic signaling pathway"/>
    <property type="evidence" value="ECO:0000315"/>
    <property type="project" value="UniProtKB"/>
</dbReference>
<dbReference type="GO" id="GO:0032272">
    <property type="term" value="P:negative regulation of protein polymerization"/>
    <property type="evidence" value="ECO:0000315"/>
    <property type="project" value="UniProtKB"/>
</dbReference>
<dbReference type="CDD" id="cd07306">
    <property type="entry name" value="Porin3_VDAC"/>
    <property type="match status" value="1"/>
</dbReference>
<dbReference type="FunFam" id="2.40.160.10:FF:000001">
    <property type="entry name" value="Voltage-dependent anion-selective channel protein 2"/>
    <property type="match status" value="1"/>
</dbReference>
<dbReference type="Gene3D" id="2.40.160.10">
    <property type="entry name" value="Porin"/>
    <property type="match status" value="1"/>
</dbReference>
<dbReference type="InterPro" id="IPR023614">
    <property type="entry name" value="Porin_dom_sf"/>
</dbReference>
<dbReference type="InterPro" id="IPR001925">
    <property type="entry name" value="Porin_Euk"/>
</dbReference>
<dbReference type="InterPro" id="IPR027246">
    <property type="entry name" value="Porin_Euk/Tom40"/>
</dbReference>
<dbReference type="PANTHER" id="PTHR11743">
    <property type="entry name" value="VOLTAGE-DEPENDENT ANION-SELECTIVE CHANNEL"/>
    <property type="match status" value="1"/>
</dbReference>
<dbReference type="PANTHER" id="PTHR11743:SF12">
    <property type="entry name" value="VOLTAGE-DEPENDENT ANION-SELECTIVE CHANNEL PROTEIN 2"/>
    <property type="match status" value="1"/>
</dbReference>
<dbReference type="Pfam" id="PF01459">
    <property type="entry name" value="Porin_3"/>
    <property type="match status" value="1"/>
</dbReference>
<dbReference type="PRINTS" id="PR00185">
    <property type="entry name" value="EUKARYTPORIN"/>
</dbReference>
<dbReference type="PROSITE" id="PS00558">
    <property type="entry name" value="EUKARYOTIC_PORIN"/>
    <property type="match status" value="1"/>
</dbReference>
<feature type="chain" id="PRO_0000050506" description="Non-selective voltage-gated ion channel VDAC2">
    <location>
        <begin position="1"/>
        <end position="295"/>
    </location>
</feature>
<feature type="transmembrane region" description="Beta stranded" evidence="3">
    <location>
        <begin position="38"/>
        <end position="45"/>
    </location>
</feature>
<feature type="transmembrane region" description="Beta stranded" evidence="3">
    <location>
        <begin position="51"/>
        <end position="60"/>
    </location>
</feature>
<feature type="transmembrane region" description="Beta stranded" evidence="3">
    <location>
        <begin position="66"/>
        <end position="76"/>
    </location>
</feature>
<feature type="transmembrane region" description="Beta stranded" evidence="3">
    <location>
        <begin position="81"/>
        <end position="88"/>
    </location>
</feature>
<feature type="transmembrane region" description="Beta stranded" evidence="3">
    <location>
        <begin position="92"/>
        <end position="100"/>
    </location>
</feature>
<feature type="transmembrane region" description="Beta stranded" evidence="3">
    <location>
        <begin position="107"/>
        <end position="116"/>
    </location>
</feature>
<feature type="transmembrane region" description="Beta stranded" evidence="3">
    <location>
        <begin position="122"/>
        <end position="131"/>
    </location>
</feature>
<feature type="transmembrane region" description="Beta stranded" evidence="3">
    <location>
        <begin position="135"/>
        <end position="144"/>
    </location>
</feature>
<feature type="transmembrane region" description="Beta stranded" evidence="3">
    <location>
        <begin position="148"/>
        <end position="157"/>
    </location>
</feature>
<feature type="transmembrane region" description="Beta stranded" evidence="3">
    <location>
        <begin position="161"/>
        <end position="170"/>
    </location>
</feature>
<feature type="transmembrane region" description="Beta stranded" evidence="3">
    <location>
        <begin position="177"/>
        <end position="187"/>
    </location>
</feature>
<feature type="transmembrane region" description="Beta stranded" evidence="3">
    <location>
        <begin position="190"/>
        <end position="197"/>
    </location>
</feature>
<feature type="transmembrane region" description="Beta stranded" evidence="3">
    <location>
        <begin position="201"/>
        <end position="210"/>
    </location>
</feature>
<feature type="transmembrane region" description="Beta stranded" evidence="3">
    <location>
        <begin position="214"/>
        <end position="222"/>
    </location>
</feature>
<feature type="transmembrane region" description="Beta stranded" evidence="3">
    <location>
        <begin position="229"/>
        <end position="238"/>
    </location>
</feature>
<feature type="transmembrane region" description="Beta stranded" evidence="3">
    <location>
        <begin position="243"/>
        <end position="250"/>
    </location>
</feature>
<feature type="transmembrane region" description="Beta stranded" evidence="3">
    <location>
        <begin position="254"/>
        <end position="263"/>
    </location>
</feature>
<feature type="transmembrane region" description="Beta stranded" evidence="3">
    <location>
        <begin position="267"/>
        <end position="275"/>
    </location>
</feature>
<feature type="transmembrane region" description="Beta stranded" evidence="3">
    <location>
        <begin position="285"/>
        <end position="295"/>
    </location>
</feature>
<feature type="binding site" evidence="3">
    <location>
        <position position="24"/>
    </location>
    <ligand>
        <name>ATP</name>
        <dbReference type="ChEBI" id="CHEBI:30616"/>
    </ligand>
</feature>
<feature type="binding site" evidence="3">
    <location>
        <position position="32"/>
    </location>
    <ligand>
        <name>ATP</name>
        <dbReference type="ChEBI" id="CHEBI:30616"/>
    </ligand>
</feature>
<feature type="binding site" evidence="1">
    <location>
        <begin position="254"/>
        <end position="256"/>
    </location>
    <ligand>
        <name>NAD(+)</name>
        <dbReference type="ChEBI" id="CHEBI:57540"/>
    </ligand>
</feature>
<feature type="binding site" evidence="1">
    <location>
        <begin position="272"/>
        <end position="276"/>
    </location>
    <ligand>
        <name>NAD(+)</name>
        <dbReference type="ChEBI" id="CHEBI:57540"/>
    </ligand>
</feature>
<feature type="site" description="Involved in ceramide and phosphatidylcholine binding" evidence="2">
    <location>
        <position position="85"/>
    </location>
</feature>
<feature type="modified residue" description="N6-acetyllysine; alternate" evidence="15">
    <location>
        <position position="32"/>
    </location>
</feature>
<feature type="modified residue" description="N6-succinyllysine; alternate" evidence="16">
    <location>
        <position position="32"/>
    </location>
</feature>
<feature type="modified residue" description="Phosphotyrosine" evidence="3">
    <location>
        <position position="79"/>
    </location>
</feature>
<feature type="modified residue" description="Phosphothreonine" evidence="1">
    <location>
        <position position="119"/>
    </location>
</feature>
<feature type="modified residue" description="N6-acetyllysine; alternate" evidence="15">
    <location>
        <position position="121"/>
    </location>
</feature>
<feature type="modified residue" description="Phosphoserine" evidence="1">
    <location>
        <position position="252"/>
    </location>
</feature>
<feature type="modified residue" description="N6-acetyllysine; alternate" evidence="1">
    <location>
        <position position="278"/>
    </location>
</feature>
<feature type="cross-link" description="Glycyl lysine isopeptide (Lys-Gly) (interchain with G-Cter in ubiquitin); alternate" evidence="2">
    <location>
        <position position="32"/>
    </location>
</feature>
<feature type="cross-link" description="Glycyl lysine isopeptide (Lys-Gly) (interchain with G-Cter in ubiquitin)" evidence="2">
    <location>
        <position position="65"/>
    </location>
</feature>
<feature type="cross-link" description="Glycyl lysine isopeptide (Lys-Gly) (interchain with G-Cter in ubiquitin); alternate" evidence="2">
    <location>
        <position position="121"/>
    </location>
</feature>
<feature type="cross-link" description="Glycyl lysine isopeptide (Lys-Gly) (interchain with G-Cter in ubiquitin)" evidence="2">
    <location>
        <position position="122"/>
    </location>
</feature>
<feature type="cross-link" description="Glycyl lysine isopeptide (Lys-Gly) (interchain with G-Cter in ubiquitin)" evidence="1">
    <location>
        <position position="173"/>
    </location>
</feature>
<feature type="cross-link" description="Glycyl lysine isopeptide (Lys-Gly) (interchain with G-Cter in ubiquitin); alternate" evidence="2">
    <location>
        <position position="278"/>
    </location>
</feature>
<feature type="sequence conflict" description="In Ref. 4; AAH03731." evidence="12" ref="4">
    <original>T</original>
    <variation>A</variation>
    <location>
        <position position="260"/>
    </location>
</feature>
<organism>
    <name type="scientific">Mus musculus</name>
    <name type="common">Mouse</name>
    <dbReference type="NCBI Taxonomy" id="10090"/>
    <lineage>
        <taxon>Eukaryota</taxon>
        <taxon>Metazoa</taxon>
        <taxon>Chordata</taxon>
        <taxon>Craniata</taxon>
        <taxon>Vertebrata</taxon>
        <taxon>Euteleostomi</taxon>
        <taxon>Mammalia</taxon>
        <taxon>Eutheria</taxon>
        <taxon>Euarchontoglires</taxon>
        <taxon>Glires</taxon>
        <taxon>Rodentia</taxon>
        <taxon>Myomorpha</taxon>
        <taxon>Muroidea</taxon>
        <taxon>Muridae</taxon>
        <taxon>Murinae</taxon>
        <taxon>Mus</taxon>
        <taxon>Mus</taxon>
    </lineage>
</organism>
<comment type="function">
    <text evidence="2 4 9">Non-selective voltage-gated ion channel that mediates the transport of anions and cations through the mitochondrion outer membrane and plasma membrane (PubMed:10430654). The channel adopts an open conformation at zero mV and a closed conformation at both positive and negative potentials (By similarity). There are two populations of channels; the main that functions in a lower open-state conductance with lower ion selectivity, that switch, in a voltage-dependent manner, from the open to a low-conducting 'closed' state and the other that has a normal ion selectivity in the typical high conductance, 'open' state (PubMed:10430654). Binds various lipids, including the sphingolipid ceramide, the phospholipid phosphatidylcholine, and the sterols cholesterol and oxysterol (PubMed:34799735). Binding of ceramide promotes the mitochondrial outer membrane permeabilization (MOMP) apoptotic pathway (By similarity).</text>
</comment>
<comment type="function">
    <text evidence="2">Catalyzes the scrambling of phospholipids across the outer mitochondrial membrane; the mechanism is unrelated to channel activity and is capable of translocating both anionic and zwitterionic phospholipids.</text>
</comment>
<comment type="catalytic activity">
    <reaction evidence="4">
        <text>chloride(in) = chloride(out)</text>
        <dbReference type="Rhea" id="RHEA:29823"/>
        <dbReference type="ChEBI" id="CHEBI:17996"/>
    </reaction>
</comment>
<comment type="catalytic activity">
    <reaction evidence="4">
        <text>K(+)(in) = K(+)(out)</text>
        <dbReference type="Rhea" id="RHEA:29463"/>
        <dbReference type="ChEBI" id="CHEBI:29103"/>
    </reaction>
</comment>
<comment type="catalytic activity">
    <reaction evidence="2">
        <text>a 1,2-diacyl-sn-glycero-3-phospho-L-serine(in) = a 1,2-diacyl-sn-glycero-3-phospho-L-serine(out)</text>
        <dbReference type="Rhea" id="RHEA:38663"/>
        <dbReference type="ChEBI" id="CHEBI:57262"/>
    </reaction>
</comment>
<comment type="catalytic activity">
    <reaction evidence="2">
        <text>a 1,2-diacyl-sn-glycero-3-phosphocholine(in) = a 1,2-diacyl-sn-glycero-3-phosphocholine(out)</text>
        <dbReference type="Rhea" id="RHEA:38571"/>
        <dbReference type="ChEBI" id="CHEBI:57643"/>
    </reaction>
</comment>
<comment type="catalytic activity">
    <reaction evidence="2">
        <text>a 1,2-diacyl-sn-glycero-3-phospho-(1D-myo-inositol)(in) = a 1,2-diacyl-sn-glycero-3-phospho-(1D-myo-inositol)(out)</text>
        <dbReference type="Rhea" id="RHEA:38691"/>
        <dbReference type="ChEBI" id="CHEBI:57880"/>
    </reaction>
</comment>
<comment type="subunit">
    <text evidence="2 5 6 7 8">Monomer, homodimer and higher order oligomers; formation of higher order structures is necessary for scramblase activity (By similarity). Interacts with ARMC12 in a TBC1D21-dependent manner (PubMed:33536340). Interacts with KLC3 (PubMed:22561200). Interacts with SPATA33 (PubMed:33087875, PubMed:34446558). Interacts with PPP3CC in a SPATA33-dependent manner (PubMed:34446558).</text>
</comment>
<comment type="interaction">
    <interactant intactId="EBI-444578">
        <id>Q60930</id>
    </interactant>
    <interactant intactId="EBI-822441">
        <id>O08734</id>
        <label>Bak1</label>
    </interactant>
    <organismsDiffer>false</organismsDiffer>
    <experiments>3</experiments>
</comment>
<comment type="subcellular location">
    <subcellularLocation>
        <location evidence="13">Mitochondrion outer membrane</location>
    </subcellularLocation>
    <subcellularLocation>
        <location evidence="2">Membrane</location>
    </subcellularLocation>
    <text evidence="2">May localize to non-mitochondrial membranes.</text>
</comment>
<comment type="tissue specificity">
    <text evidence="6 10">Highest levels of expression detected in testis, less but still abundant expression in heart, kidney, brain, and skeletal muscle (PubMed:8660977). Expressed in the sperm midpiece (at protein level) (PubMed:33087875).</text>
</comment>
<comment type="domain">
    <text evidence="1">Consists mainly of a membrane-spanning beta-barrel formed by 19 beta-strands.</text>
</comment>
<comment type="PTM">
    <text evidence="2">Ubiquitinated by PRKN during mitophagy, leading to its degradation and enhancement of mitophagy. Deubiquitinated by USP30.</text>
</comment>
<comment type="similarity">
    <text evidence="12">Belongs to the eukaryotic mitochondrial porin family.</text>
</comment>
<keyword id="KW-0007">Acetylation</keyword>
<keyword id="KW-0067">ATP-binding</keyword>
<keyword id="KW-0903">Direct protein sequencing</keyword>
<keyword id="KW-0406">Ion transport</keyword>
<keyword id="KW-1017">Isopeptide bond</keyword>
<keyword id="KW-0445">Lipid transport</keyword>
<keyword id="KW-0446">Lipid-binding</keyword>
<keyword id="KW-0472">Membrane</keyword>
<keyword id="KW-0496">Mitochondrion</keyword>
<keyword id="KW-1000">Mitochondrion outer membrane</keyword>
<keyword id="KW-0520">NAD</keyword>
<keyword id="KW-0547">Nucleotide-binding</keyword>
<keyword id="KW-0597">Phosphoprotein</keyword>
<keyword id="KW-0626">Porin</keyword>
<keyword id="KW-1185">Reference proteome</keyword>
<keyword id="KW-0812">Transmembrane</keyword>
<keyword id="KW-1134">Transmembrane beta strand</keyword>
<keyword id="KW-0813">Transport</keyword>
<keyword id="KW-0832">Ubl conjugation</keyword>
<proteinExistence type="evidence at protein level"/>
<name>VDAC2_MOUSE</name>
<protein>
    <recommendedName>
        <fullName evidence="12">Non-selective voltage-gated ion channel VDAC2</fullName>
        <shortName>VDAC-2</shortName>
        <shortName>mVDAC2</shortName>
    </recommendedName>
    <alternativeName>
        <fullName>Outer mitochondrial membrane protein porin 2</fullName>
    </alternativeName>
    <alternativeName>
        <fullName>Voltage-dependent anion-selective channel protein 6</fullName>
        <shortName>VDAC-6</shortName>
        <shortName evidence="11">mVDAC6</shortName>
    </alternativeName>
</protein>
<accession>Q60930</accession>
<accession>Q78MH6</accession>
<accession>Q99L98</accession>